<evidence type="ECO:0000250" key="1"/>
<evidence type="ECO:0000256" key="2">
    <source>
        <dbReference type="SAM" id="MobiDB-lite"/>
    </source>
</evidence>
<evidence type="ECO:0000305" key="3"/>
<protein>
    <recommendedName>
        <fullName>Histone H2A</fullName>
    </recommendedName>
</protein>
<dbReference type="EMBL" id="X53330">
    <property type="protein sequence ID" value="CAA37416.1"/>
    <property type="molecule type" value="Genomic_DNA"/>
</dbReference>
<dbReference type="PIR" id="S11314">
    <property type="entry name" value="S11314"/>
</dbReference>
<dbReference type="SMR" id="P19178"/>
<dbReference type="GO" id="GO:0000786">
    <property type="term" value="C:nucleosome"/>
    <property type="evidence" value="ECO:0007669"/>
    <property type="project" value="UniProtKB-KW"/>
</dbReference>
<dbReference type="GO" id="GO:0005634">
    <property type="term" value="C:nucleus"/>
    <property type="evidence" value="ECO:0007669"/>
    <property type="project" value="UniProtKB-SubCell"/>
</dbReference>
<dbReference type="GO" id="GO:0003677">
    <property type="term" value="F:DNA binding"/>
    <property type="evidence" value="ECO:0007669"/>
    <property type="project" value="UniProtKB-KW"/>
</dbReference>
<dbReference type="GO" id="GO:0046982">
    <property type="term" value="F:protein heterodimerization activity"/>
    <property type="evidence" value="ECO:0007669"/>
    <property type="project" value="InterPro"/>
</dbReference>
<dbReference type="GO" id="GO:0030527">
    <property type="term" value="F:structural constituent of chromatin"/>
    <property type="evidence" value="ECO:0007669"/>
    <property type="project" value="InterPro"/>
</dbReference>
<dbReference type="CDD" id="cd00074">
    <property type="entry name" value="HFD_H2A"/>
    <property type="match status" value="1"/>
</dbReference>
<dbReference type="FunFam" id="1.10.20.10:FF:000020">
    <property type="entry name" value="Histone H2A"/>
    <property type="match status" value="1"/>
</dbReference>
<dbReference type="Gene3D" id="1.10.20.10">
    <property type="entry name" value="Histone, subunit A"/>
    <property type="match status" value="1"/>
</dbReference>
<dbReference type="InterPro" id="IPR009072">
    <property type="entry name" value="Histone-fold"/>
</dbReference>
<dbReference type="InterPro" id="IPR002119">
    <property type="entry name" value="Histone_H2A"/>
</dbReference>
<dbReference type="InterPro" id="IPR007125">
    <property type="entry name" value="Histone_H2A/H2B/H3"/>
</dbReference>
<dbReference type="InterPro" id="IPR032454">
    <property type="entry name" value="Histone_H2A_C"/>
</dbReference>
<dbReference type="InterPro" id="IPR032458">
    <property type="entry name" value="Histone_H2A_CS"/>
</dbReference>
<dbReference type="PANTHER" id="PTHR23430">
    <property type="entry name" value="HISTONE H2A"/>
    <property type="match status" value="1"/>
</dbReference>
<dbReference type="Pfam" id="PF00125">
    <property type="entry name" value="Histone"/>
    <property type="match status" value="1"/>
</dbReference>
<dbReference type="Pfam" id="PF16211">
    <property type="entry name" value="Histone_H2A_C"/>
    <property type="match status" value="1"/>
</dbReference>
<dbReference type="PRINTS" id="PR00620">
    <property type="entry name" value="HISTONEH2A"/>
</dbReference>
<dbReference type="SMART" id="SM00414">
    <property type="entry name" value="H2A"/>
    <property type="match status" value="1"/>
</dbReference>
<dbReference type="SUPFAM" id="SSF47113">
    <property type="entry name" value="Histone-fold"/>
    <property type="match status" value="1"/>
</dbReference>
<dbReference type="PROSITE" id="PS00046">
    <property type="entry name" value="HISTONE_H2A"/>
    <property type="match status" value="1"/>
</dbReference>
<comment type="function">
    <text>Core component of nucleosome. Nucleosomes wrap and compact DNA into chromatin, limiting DNA accessibility to the cellular machineries which require DNA as a template. Histones thereby play a central role in transcription regulation, DNA repair, DNA replication and chromosomal stability. DNA accessibility is regulated via a complex set of post-translational modifications of histones, also called histone code, and nucleosome remodeling.</text>
</comment>
<comment type="subunit">
    <text>The nucleosome is a histone octamer containing two molecules each of H2A, H2B, H3 and H4 assembled in one H3-H4 heterotetramer and two H2A-H2B heterodimers. The octamer wraps approximately 147 bp of DNA.</text>
</comment>
<comment type="subcellular location">
    <subcellularLocation>
        <location>Nucleus</location>
    </subcellularLocation>
    <subcellularLocation>
        <location>Chromosome</location>
    </subcellularLocation>
</comment>
<comment type="PTM">
    <text evidence="1">Phosphorylation of Ser-2 directly represses transcription.</text>
</comment>
<comment type="similarity">
    <text evidence="3">Belongs to the histone H2A family.</text>
</comment>
<keyword id="KW-0007">Acetylation</keyword>
<keyword id="KW-0158">Chromosome</keyword>
<keyword id="KW-0238">DNA-binding</keyword>
<keyword id="KW-0488">Methylation</keyword>
<keyword id="KW-0544">Nucleosome core</keyword>
<keyword id="KW-0539">Nucleus</keyword>
<keyword id="KW-0597">Phosphoprotein</keyword>
<feature type="initiator methionine" description="Removed" evidence="1">
    <location>
        <position position="1"/>
    </location>
</feature>
<feature type="chain" id="PRO_0000055268" description="Histone H2A">
    <location>
        <begin position="2"/>
        <end position="124"/>
    </location>
</feature>
<feature type="region of interest" description="Disordered" evidence="2">
    <location>
        <begin position="1"/>
        <end position="23"/>
    </location>
</feature>
<feature type="compositionally biased region" description="Basic residues" evidence="2">
    <location>
        <begin position="1"/>
        <end position="18"/>
    </location>
</feature>
<feature type="modified residue" description="N-acetylserine" evidence="1">
    <location>
        <position position="2"/>
    </location>
</feature>
<feature type="modified residue" description="Phosphoserine" evidence="1">
    <location>
        <position position="2"/>
    </location>
</feature>
<feature type="modified residue" description="N5-methylglutamine" evidence="1">
    <location>
        <position position="104"/>
    </location>
</feature>
<organism>
    <name type="scientific">Platynereis dumerilii</name>
    <name type="common">Dumeril's clam worm</name>
    <dbReference type="NCBI Taxonomy" id="6359"/>
    <lineage>
        <taxon>Eukaryota</taxon>
        <taxon>Metazoa</taxon>
        <taxon>Spiralia</taxon>
        <taxon>Lophotrochozoa</taxon>
        <taxon>Annelida</taxon>
        <taxon>Polychaeta</taxon>
        <taxon>Errantia</taxon>
        <taxon>Phyllodocida</taxon>
        <taxon>Nereididae</taxon>
        <taxon>Platynereis</taxon>
    </lineage>
</organism>
<proteinExistence type="inferred from homology"/>
<sequence length="124" mass="13310">MSGRGKGGKAKGKSKTRSSRAGLQFPVGRIHRLLRKGNYAERVGAGAPVYLAAVMEYLAAEVLELAGNAARDNKKTRIIPRHLQLAIRNDEELNKLLSGVTIAQGGVLPNIQAVLLPKKTTKAK</sequence>
<name>H2A_PLADU</name>
<reference key="1">
    <citation type="journal article" date="1990" name="Eur. J. Biochem.">
        <title>Organization and complete nucleotide sequence of the core-histone-gene cluster of the annelid Platynereis dumerilii.</title>
        <authorList>
            <person name="Sellos D."/>
            <person name="Krawetz S.A."/>
            <person name="Dixon G.H."/>
        </authorList>
    </citation>
    <scope>NUCLEOTIDE SEQUENCE [GENOMIC DNA]</scope>
    <source>
        <tissue>Sperm</tissue>
    </source>
</reference>
<accession>P19178</accession>